<protein>
    <recommendedName>
        <fullName evidence="1">Aspartate--ammonia ligase</fullName>
        <ecNumber evidence="1">6.3.1.1</ecNumber>
    </recommendedName>
    <alternativeName>
        <fullName evidence="1">Asparagine synthetase A</fullName>
    </alternativeName>
</protein>
<dbReference type="EC" id="6.3.1.1" evidence="1"/>
<dbReference type="EMBL" id="CP001113">
    <property type="protein sequence ID" value="ACF62997.1"/>
    <property type="molecule type" value="Genomic_DNA"/>
</dbReference>
<dbReference type="RefSeq" id="WP_000845085.1">
    <property type="nucleotide sequence ID" value="NZ_CCMR01000001.1"/>
</dbReference>
<dbReference type="SMR" id="B4SYE5"/>
<dbReference type="KEGG" id="see:SNSL254_A4160"/>
<dbReference type="HOGENOM" id="CLU_071543_0_0_6"/>
<dbReference type="UniPathway" id="UPA00134">
    <property type="reaction ID" value="UER00194"/>
</dbReference>
<dbReference type="Proteomes" id="UP000008824">
    <property type="component" value="Chromosome"/>
</dbReference>
<dbReference type="GO" id="GO:0005829">
    <property type="term" value="C:cytosol"/>
    <property type="evidence" value="ECO:0007669"/>
    <property type="project" value="TreeGrafter"/>
</dbReference>
<dbReference type="GO" id="GO:0004071">
    <property type="term" value="F:aspartate-ammonia ligase activity"/>
    <property type="evidence" value="ECO:0007669"/>
    <property type="project" value="UniProtKB-UniRule"/>
</dbReference>
<dbReference type="GO" id="GO:0005524">
    <property type="term" value="F:ATP binding"/>
    <property type="evidence" value="ECO:0007669"/>
    <property type="project" value="UniProtKB-UniRule"/>
</dbReference>
<dbReference type="GO" id="GO:0070981">
    <property type="term" value="P:L-asparagine biosynthetic process"/>
    <property type="evidence" value="ECO:0007669"/>
    <property type="project" value="UniProtKB-UniRule"/>
</dbReference>
<dbReference type="CDD" id="cd00645">
    <property type="entry name" value="AsnA"/>
    <property type="match status" value="1"/>
</dbReference>
<dbReference type="FunFam" id="3.30.930.10:FF:000025">
    <property type="entry name" value="Aspartate--ammonia ligase"/>
    <property type="match status" value="1"/>
</dbReference>
<dbReference type="Gene3D" id="3.30.930.10">
    <property type="entry name" value="Bira Bifunctional Protein, Domain 2"/>
    <property type="match status" value="1"/>
</dbReference>
<dbReference type="HAMAP" id="MF_00555">
    <property type="entry name" value="AsnA"/>
    <property type="match status" value="1"/>
</dbReference>
<dbReference type="InterPro" id="IPR006195">
    <property type="entry name" value="aa-tRNA-synth_II"/>
</dbReference>
<dbReference type="InterPro" id="IPR045864">
    <property type="entry name" value="aa-tRNA-synth_II/BPL/LPL"/>
</dbReference>
<dbReference type="InterPro" id="IPR004618">
    <property type="entry name" value="AsnA"/>
</dbReference>
<dbReference type="NCBIfam" id="TIGR00669">
    <property type="entry name" value="asnA"/>
    <property type="match status" value="1"/>
</dbReference>
<dbReference type="PANTHER" id="PTHR30073">
    <property type="entry name" value="ASPARTATE--AMMONIA LIGASE"/>
    <property type="match status" value="1"/>
</dbReference>
<dbReference type="PANTHER" id="PTHR30073:SF5">
    <property type="entry name" value="ASPARTATE--AMMONIA LIGASE"/>
    <property type="match status" value="1"/>
</dbReference>
<dbReference type="Pfam" id="PF03590">
    <property type="entry name" value="AsnA"/>
    <property type="match status" value="1"/>
</dbReference>
<dbReference type="PIRSF" id="PIRSF001555">
    <property type="entry name" value="Asp_ammon_ligase"/>
    <property type="match status" value="1"/>
</dbReference>
<dbReference type="SUPFAM" id="SSF55681">
    <property type="entry name" value="Class II aaRS and biotin synthetases"/>
    <property type="match status" value="1"/>
</dbReference>
<dbReference type="PROSITE" id="PS50862">
    <property type="entry name" value="AA_TRNA_LIGASE_II"/>
    <property type="match status" value="1"/>
</dbReference>
<gene>
    <name evidence="1" type="primary">asnA</name>
    <name type="ordered locus">SNSL254_A4160</name>
</gene>
<sequence length="330" mass="36864">MKTAYIAKQRQISFVKLHFSRQLEERLGLIEVQAPILSRVGDGTQDNLSGCEKAVQVKVKALPDAQFEVVHSLAKWKRQTLGQHDFSAGEGLYTHMKALRPDEDRLSPLHSVYVDQWDWERVMGDGERQFSTLKSTVEAIWAGIKATEAEVHKQFGLAPFLPEQIQFVHSQELLSRYPDLDAKGRERAIAKELGAVFLVGIGGKLSDGHRHDVRAPDYDDWSSASELGYAGLNGDILVWNPVLEDAFELSSMGIRVDADTLMRQLALTGDEDRLQLEWHQALLRGEMPQTIGGGIGQSRLTMLLLQLPHIGQVQCGVWPAQVRESIPAIL</sequence>
<proteinExistence type="inferred from homology"/>
<keyword id="KW-0028">Amino-acid biosynthesis</keyword>
<keyword id="KW-0061">Asparagine biosynthesis</keyword>
<keyword id="KW-0067">ATP-binding</keyword>
<keyword id="KW-0963">Cytoplasm</keyword>
<keyword id="KW-0436">Ligase</keyword>
<keyword id="KW-0547">Nucleotide-binding</keyword>
<organism>
    <name type="scientific">Salmonella newport (strain SL254)</name>
    <dbReference type="NCBI Taxonomy" id="423368"/>
    <lineage>
        <taxon>Bacteria</taxon>
        <taxon>Pseudomonadati</taxon>
        <taxon>Pseudomonadota</taxon>
        <taxon>Gammaproteobacteria</taxon>
        <taxon>Enterobacterales</taxon>
        <taxon>Enterobacteriaceae</taxon>
        <taxon>Salmonella</taxon>
    </lineage>
</organism>
<reference key="1">
    <citation type="journal article" date="2011" name="J. Bacteriol.">
        <title>Comparative genomics of 28 Salmonella enterica isolates: evidence for CRISPR-mediated adaptive sublineage evolution.</title>
        <authorList>
            <person name="Fricke W.F."/>
            <person name="Mammel M.K."/>
            <person name="McDermott P.F."/>
            <person name="Tartera C."/>
            <person name="White D.G."/>
            <person name="Leclerc J.E."/>
            <person name="Ravel J."/>
            <person name="Cebula T.A."/>
        </authorList>
    </citation>
    <scope>NUCLEOTIDE SEQUENCE [LARGE SCALE GENOMIC DNA]</scope>
    <source>
        <strain>SL254</strain>
    </source>
</reference>
<name>ASNA_SALNS</name>
<comment type="catalytic activity">
    <reaction evidence="1">
        <text>L-aspartate + NH4(+) + ATP = L-asparagine + AMP + diphosphate + H(+)</text>
        <dbReference type="Rhea" id="RHEA:11372"/>
        <dbReference type="ChEBI" id="CHEBI:15378"/>
        <dbReference type="ChEBI" id="CHEBI:28938"/>
        <dbReference type="ChEBI" id="CHEBI:29991"/>
        <dbReference type="ChEBI" id="CHEBI:30616"/>
        <dbReference type="ChEBI" id="CHEBI:33019"/>
        <dbReference type="ChEBI" id="CHEBI:58048"/>
        <dbReference type="ChEBI" id="CHEBI:456215"/>
        <dbReference type="EC" id="6.3.1.1"/>
    </reaction>
</comment>
<comment type="pathway">
    <text evidence="1">Amino-acid biosynthesis; L-asparagine biosynthesis; L-asparagine from L-aspartate (ammonia route): step 1/1.</text>
</comment>
<comment type="subcellular location">
    <subcellularLocation>
        <location evidence="1">Cytoplasm</location>
    </subcellularLocation>
</comment>
<comment type="similarity">
    <text evidence="1">Belongs to the class-II aminoacyl-tRNA synthetase family. AsnA subfamily.</text>
</comment>
<accession>B4SYE5</accession>
<evidence type="ECO:0000255" key="1">
    <source>
        <dbReference type="HAMAP-Rule" id="MF_00555"/>
    </source>
</evidence>
<feature type="chain" id="PRO_1000129127" description="Aspartate--ammonia ligase">
    <location>
        <begin position="1"/>
        <end position="330"/>
    </location>
</feature>